<accession>Q12199</accession>
<accession>D6W449</accession>
<organism>
    <name type="scientific">Saccharomyces cerevisiae (strain ATCC 204508 / S288c)</name>
    <name type="common">Baker's yeast</name>
    <dbReference type="NCBI Taxonomy" id="559292"/>
    <lineage>
        <taxon>Eukaryota</taxon>
        <taxon>Fungi</taxon>
        <taxon>Dikarya</taxon>
        <taxon>Ascomycota</taxon>
        <taxon>Saccharomycotina</taxon>
        <taxon>Saccharomycetes</taxon>
        <taxon>Saccharomycetales</taxon>
        <taxon>Saccharomycetaceae</taxon>
        <taxon>Saccharomyces</taxon>
    </lineage>
</organism>
<keyword id="KW-0963">Cytoplasm</keyword>
<keyword id="KW-0539">Nucleus</keyword>
<keyword id="KW-0597">Phosphoprotein</keyword>
<keyword id="KW-1185">Reference proteome</keyword>
<keyword id="KW-0734">Signal transduction inhibitor</keyword>
<evidence type="ECO:0000256" key="1">
    <source>
        <dbReference type="SAM" id="MobiDB-lite"/>
    </source>
</evidence>
<evidence type="ECO:0000269" key="2">
    <source>
    </source>
</evidence>
<evidence type="ECO:0000269" key="3">
    <source>
    </source>
</evidence>
<evidence type="ECO:0000305" key="4"/>
<evidence type="ECO:0007744" key="5">
    <source>
    </source>
</evidence>
<evidence type="ECO:0007744" key="6">
    <source>
    </source>
</evidence>
<sequence>MSKRNTPPLRSSGINTIQINAAREMHAQTVRARRMPMPTSGITTPSVQPTAAPATPPRHICNNPNNPQCLHCGSVIIPSPRATLPLEDNPSISINDWTISSRKKPILNSQELDIWENEKLKGLTLPEMIFGNNYIRIENSKQHWSIEFNALDALKEVQLQDSGIRVAYSNDWINSKKRQNSTNGAQRFTNDVNDDSLNIIHKYDWTYTTRYKGTESSPESKFRLDNDQKLPLDKLAVHDKILFYDDMILFEDELADNGISILNVKIRVMNERLLLLSRFFLRVDDVLVRVYDTRIYVEFDENVVIRESKEFEGKYQDVLAKHRLSQSHDPKAALRDSNWVAQNTPMIKRQCEIIQF</sequence>
<gene>
    <name type="primary">TIP41</name>
    <name type="ordered locus">YPR040W</name>
    <name type="ORF">YP3085.04</name>
</gene>
<dbReference type="EMBL" id="Z71255">
    <property type="protein sequence ID" value="CAA94988.1"/>
    <property type="molecule type" value="Genomic_DNA"/>
</dbReference>
<dbReference type="EMBL" id="Z68111">
    <property type="protein sequence ID" value="CAA92144.1"/>
    <property type="molecule type" value="Genomic_DNA"/>
</dbReference>
<dbReference type="EMBL" id="BK006949">
    <property type="protein sequence ID" value="DAA11465.1"/>
    <property type="molecule type" value="Genomic_DNA"/>
</dbReference>
<dbReference type="PIR" id="S61061">
    <property type="entry name" value="S61061"/>
</dbReference>
<dbReference type="RefSeq" id="NP_015365.1">
    <property type="nucleotide sequence ID" value="NM_001184137.1"/>
</dbReference>
<dbReference type="SMR" id="Q12199"/>
<dbReference type="BioGRID" id="36217">
    <property type="interactions" value="99"/>
</dbReference>
<dbReference type="DIP" id="DIP-1609N"/>
<dbReference type="FunCoup" id="Q12199">
    <property type="interactions" value="955"/>
</dbReference>
<dbReference type="IntAct" id="Q12199">
    <property type="interactions" value="18"/>
</dbReference>
<dbReference type="MINT" id="Q12199"/>
<dbReference type="STRING" id="4932.YPR040W"/>
<dbReference type="GlyGen" id="Q12199">
    <property type="glycosylation" value="3 sites, 1 O-linked glycan (1 site)"/>
</dbReference>
<dbReference type="iPTMnet" id="Q12199"/>
<dbReference type="PaxDb" id="4932-YPR040W"/>
<dbReference type="PeptideAtlas" id="Q12199"/>
<dbReference type="EnsemblFungi" id="YPR040W_mRNA">
    <property type="protein sequence ID" value="YPR040W"/>
    <property type="gene ID" value="YPR040W"/>
</dbReference>
<dbReference type="GeneID" id="856153"/>
<dbReference type="KEGG" id="sce:YPR040W"/>
<dbReference type="AGR" id="SGD:S000006244"/>
<dbReference type="SGD" id="S000006244">
    <property type="gene designation" value="TIP41"/>
</dbReference>
<dbReference type="VEuPathDB" id="FungiDB:YPR040W"/>
<dbReference type="eggNOG" id="KOG3224">
    <property type="taxonomic scope" value="Eukaryota"/>
</dbReference>
<dbReference type="GeneTree" id="ENSGT00390000006659"/>
<dbReference type="HOGENOM" id="CLU_039187_0_2_1"/>
<dbReference type="InParanoid" id="Q12199"/>
<dbReference type="OMA" id="DMILFED"/>
<dbReference type="OrthoDB" id="10253878at2759"/>
<dbReference type="BioCyc" id="YEAST:G3O-34196-MONOMER"/>
<dbReference type="BioGRID-ORCS" id="856153">
    <property type="hits" value="5 hits in 10 CRISPR screens"/>
</dbReference>
<dbReference type="PRO" id="PR:Q12199"/>
<dbReference type="Proteomes" id="UP000002311">
    <property type="component" value="Chromosome XVI"/>
</dbReference>
<dbReference type="RNAct" id="Q12199">
    <property type="molecule type" value="protein"/>
</dbReference>
<dbReference type="GO" id="GO:0005737">
    <property type="term" value="C:cytoplasm"/>
    <property type="evidence" value="ECO:0007005"/>
    <property type="project" value="SGD"/>
</dbReference>
<dbReference type="GO" id="GO:0005829">
    <property type="term" value="C:cytosol"/>
    <property type="evidence" value="ECO:0000318"/>
    <property type="project" value="GO_Central"/>
</dbReference>
<dbReference type="GO" id="GO:0005634">
    <property type="term" value="C:nucleus"/>
    <property type="evidence" value="ECO:0007005"/>
    <property type="project" value="SGD"/>
</dbReference>
<dbReference type="GO" id="GO:0072542">
    <property type="term" value="F:protein phosphatase activator activity"/>
    <property type="evidence" value="ECO:0000318"/>
    <property type="project" value="GO_Central"/>
</dbReference>
<dbReference type="GO" id="GO:1904262">
    <property type="term" value="P:negative regulation of TORC1 signaling"/>
    <property type="evidence" value="ECO:0000315"/>
    <property type="project" value="SGD"/>
</dbReference>
<dbReference type="GO" id="GO:0031929">
    <property type="term" value="P:TOR signaling"/>
    <property type="evidence" value="ECO:0000318"/>
    <property type="project" value="GO_Central"/>
</dbReference>
<dbReference type="InterPro" id="IPR051330">
    <property type="entry name" value="Phosphatase_reg/MetRdx"/>
</dbReference>
<dbReference type="InterPro" id="IPR007303">
    <property type="entry name" value="TIP41-like"/>
</dbReference>
<dbReference type="PANTHER" id="PTHR21021">
    <property type="entry name" value="GAF/PUTATIVE CYTOSKELETAL PROTEIN"/>
    <property type="match status" value="1"/>
</dbReference>
<dbReference type="PANTHER" id="PTHR21021:SF16">
    <property type="entry name" value="TIP41-LIKE PROTEIN"/>
    <property type="match status" value="1"/>
</dbReference>
<dbReference type="Pfam" id="PF04176">
    <property type="entry name" value="TIP41"/>
    <property type="match status" value="1"/>
</dbReference>
<proteinExistence type="evidence at protein level"/>
<reference key="1">
    <citation type="journal article" date="1997" name="Nature">
        <title>The nucleotide sequence of Saccharomyces cerevisiae chromosome XVI.</title>
        <authorList>
            <person name="Bussey H."/>
            <person name="Storms R.K."/>
            <person name="Ahmed A."/>
            <person name="Albermann K."/>
            <person name="Allen E."/>
            <person name="Ansorge W."/>
            <person name="Araujo R."/>
            <person name="Aparicio A."/>
            <person name="Barrell B.G."/>
            <person name="Badcock K."/>
            <person name="Benes V."/>
            <person name="Botstein D."/>
            <person name="Bowman S."/>
            <person name="Brueckner M."/>
            <person name="Carpenter J."/>
            <person name="Cherry J.M."/>
            <person name="Chung E."/>
            <person name="Churcher C.M."/>
            <person name="Coster F."/>
            <person name="Davis K."/>
            <person name="Davis R.W."/>
            <person name="Dietrich F.S."/>
            <person name="Delius H."/>
            <person name="DiPaolo T."/>
            <person name="Dubois E."/>
            <person name="Duesterhoeft A."/>
            <person name="Duncan M."/>
            <person name="Floeth M."/>
            <person name="Fortin N."/>
            <person name="Friesen J.D."/>
            <person name="Fritz C."/>
            <person name="Goffeau A."/>
            <person name="Hall J."/>
            <person name="Hebling U."/>
            <person name="Heumann K."/>
            <person name="Hilbert H."/>
            <person name="Hillier L.W."/>
            <person name="Hunicke-Smith S."/>
            <person name="Hyman R.W."/>
            <person name="Johnston M."/>
            <person name="Kalman S."/>
            <person name="Kleine K."/>
            <person name="Komp C."/>
            <person name="Kurdi O."/>
            <person name="Lashkari D."/>
            <person name="Lew H."/>
            <person name="Lin A."/>
            <person name="Lin D."/>
            <person name="Louis E.J."/>
            <person name="Marathe R."/>
            <person name="Messenguy F."/>
            <person name="Mewes H.-W."/>
            <person name="Mirtipati S."/>
            <person name="Moestl D."/>
            <person name="Mueller-Auer S."/>
            <person name="Namath A."/>
            <person name="Nentwich U."/>
            <person name="Oefner P."/>
            <person name="Pearson D."/>
            <person name="Petel F.X."/>
            <person name="Pohl T.M."/>
            <person name="Purnelle B."/>
            <person name="Rajandream M.A."/>
            <person name="Rechmann S."/>
            <person name="Rieger M."/>
            <person name="Riles L."/>
            <person name="Roberts D."/>
            <person name="Schaefer M."/>
            <person name="Scharfe M."/>
            <person name="Scherens B."/>
            <person name="Schramm S."/>
            <person name="Schroeder M."/>
            <person name="Sdicu A.-M."/>
            <person name="Tettelin H."/>
            <person name="Urrestarazu L.A."/>
            <person name="Ushinsky S."/>
            <person name="Vierendeels F."/>
            <person name="Vissers S."/>
            <person name="Voss H."/>
            <person name="Walsh S.V."/>
            <person name="Wambutt R."/>
            <person name="Wang Y."/>
            <person name="Wedler E."/>
            <person name="Wedler H."/>
            <person name="Winnett E."/>
            <person name="Zhong W.-W."/>
            <person name="Zollner A."/>
            <person name="Vo D.H."/>
            <person name="Hani J."/>
        </authorList>
    </citation>
    <scope>NUCLEOTIDE SEQUENCE [LARGE SCALE GENOMIC DNA]</scope>
    <source>
        <strain>ATCC 204508 / S288c</strain>
    </source>
</reference>
<reference key="2">
    <citation type="journal article" date="2014" name="G3 (Bethesda)">
        <title>The reference genome sequence of Saccharomyces cerevisiae: Then and now.</title>
        <authorList>
            <person name="Engel S.R."/>
            <person name="Dietrich F.S."/>
            <person name="Fisk D.G."/>
            <person name="Binkley G."/>
            <person name="Balakrishnan R."/>
            <person name="Costanzo M.C."/>
            <person name="Dwight S.S."/>
            <person name="Hitz B.C."/>
            <person name="Karra K."/>
            <person name="Nash R.S."/>
            <person name="Weng S."/>
            <person name="Wong E.D."/>
            <person name="Lloyd P."/>
            <person name="Skrzypek M.S."/>
            <person name="Miyasato S.R."/>
            <person name="Simison M."/>
            <person name="Cherry J.M."/>
        </authorList>
    </citation>
    <scope>GENOME REANNOTATION</scope>
    <source>
        <strain>ATCC 204508 / S288c</strain>
    </source>
</reference>
<reference key="3">
    <citation type="journal article" date="1996" name="Yeast">
        <title>Removal of an intron with unique 3' branch site creates an amino-terminal protein sequence directing the scERV1 gene product to mitochondria.</title>
        <authorList>
            <person name="Lisowsky T."/>
        </authorList>
    </citation>
    <scope>REVISION OF GENE MODEL</scope>
    <source>
        <strain>ATCC 204511 / S288c / AB972</strain>
    </source>
</reference>
<reference key="4">
    <citation type="journal article" date="2001" name="Mol. Cell">
        <title>TIP41 interacts with TAP42 and negatively regulates the TOR signaling pathway.</title>
        <authorList>
            <person name="Jacinto E."/>
            <person name="Guo B."/>
            <person name="Arndt K.T."/>
            <person name="Schmelzle T."/>
            <person name="Hall M.N."/>
        </authorList>
    </citation>
    <scope>FUNCTION</scope>
    <scope>INTERACTION WITH TAP42 AND NPR1</scope>
    <scope>PHOSPHORYLATION</scope>
</reference>
<reference key="5">
    <citation type="journal article" date="2003" name="Genetics">
        <title>Suppression of a defect in mitochondrial protein import identifies cytosolic proteins required for viability of yeast cells lacking mitochondrial DNA.</title>
        <authorList>
            <person name="Dunn C.D."/>
            <person name="Jensen R.E."/>
        </authorList>
    </citation>
    <scope>SUBCELLULAR LOCATION</scope>
</reference>
<reference key="6">
    <citation type="journal article" date="2003" name="Nature">
        <title>Global analysis of protein localization in budding yeast.</title>
        <authorList>
            <person name="Huh W.-K."/>
            <person name="Falvo J.V."/>
            <person name="Gerke L.C."/>
            <person name="Carroll A.S."/>
            <person name="Howson R.W."/>
            <person name="Weissman J.S."/>
            <person name="O'Shea E.K."/>
        </authorList>
    </citation>
    <scope>SUBCELLULAR LOCATION [LARGE SCALE ANALYSIS]</scope>
</reference>
<reference key="7">
    <citation type="journal article" date="2004" name="Eukaryot. Cell">
        <title>PP2A phosphatase activity is required for stress and Tor kinase regulation of yeast stress response factor Msn2p.</title>
        <authorList>
            <person name="Santhanam A."/>
            <person name="Hartley A."/>
            <person name="Duevel K."/>
            <person name="Broach J.R."/>
            <person name="Garrett S."/>
        </authorList>
    </citation>
    <scope>FUNCTION</scope>
</reference>
<reference key="8">
    <citation type="journal article" date="2008" name="Mol. Cell. Proteomics">
        <title>A multidimensional chromatography technology for in-depth phosphoproteome analysis.</title>
        <authorList>
            <person name="Albuquerque C.P."/>
            <person name="Smolka M.B."/>
            <person name="Payne S.H."/>
            <person name="Bafna V."/>
            <person name="Eng J."/>
            <person name="Zhou H."/>
        </authorList>
    </citation>
    <scope>PHOSPHORYLATION [LARGE SCALE ANALYSIS] AT THR-55</scope>
    <scope>IDENTIFICATION BY MASS SPECTROMETRY [LARGE SCALE ANALYSIS]</scope>
</reference>
<reference key="9">
    <citation type="journal article" date="2009" name="Science">
        <title>Global analysis of Cdk1 substrate phosphorylation sites provides insights into evolution.</title>
        <authorList>
            <person name="Holt L.J."/>
            <person name="Tuch B.B."/>
            <person name="Villen J."/>
            <person name="Johnson A.D."/>
            <person name="Gygi S.P."/>
            <person name="Morgan D.O."/>
        </authorList>
    </citation>
    <scope>PHOSPHORYLATION [LARGE SCALE ANALYSIS] AT THR-55</scope>
    <scope>IDENTIFICATION BY MASS SPECTROMETRY [LARGE SCALE ANALYSIS]</scope>
</reference>
<feature type="chain" id="PRO_0000247903" description="Type 2A phosphatase activator TIP41">
    <location>
        <begin position="1"/>
        <end position="356"/>
    </location>
</feature>
<feature type="region of interest" description="Disordered" evidence="1">
    <location>
        <begin position="36"/>
        <end position="55"/>
    </location>
</feature>
<feature type="compositionally biased region" description="Polar residues" evidence="1">
    <location>
        <begin position="40"/>
        <end position="49"/>
    </location>
</feature>
<feature type="modified residue" description="Phosphothreonine" evidence="5 6">
    <location>
        <position position="55"/>
    </location>
</feature>
<comment type="function">
    <text evidence="2 3">Involved in negative regulation of the TOR signaling pathway in response to type of available nitrogen source. Indirectly activates the PP2A phosphatase SIT4 via interaction with its suppressor TAP42. This interaction is enhanced under nitrogen limitation conditions. Also has a role in regulation of NPR1 in response to nitrogen limitation.</text>
</comment>
<comment type="subunit">
    <text evidence="2">Interacts with TAP42 and NPR1.</text>
</comment>
<comment type="interaction">
    <interactant intactId="EBI-38123">
        <id>Q12199</id>
    </interactant>
    <interactant intactId="EBI-12752">
        <id>P23595</id>
        <label>PPH22</label>
    </interactant>
    <organismsDiffer>false</organismsDiffer>
    <experiments>3</experiments>
</comment>
<comment type="interaction">
    <interactant intactId="EBI-38123">
        <id>Q12199</id>
    </interactant>
    <interactant intactId="EBI-16370">
        <id>P43612</id>
        <label>SAP155</label>
    </interactant>
    <organismsDiffer>false</organismsDiffer>
    <experiments>3</experiments>
</comment>
<comment type="subcellular location">
    <subcellularLocation>
        <location>Cytoplasm</location>
    </subcellularLocation>
    <subcellularLocation>
        <location>Nucleus</location>
    </subcellularLocation>
</comment>
<comment type="PTM">
    <text evidence="2">Phosphorylation. Dephosphorylated by SIT4.</text>
</comment>
<comment type="similarity">
    <text evidence="4">Belongs to the TIP41 family.</text>
</comment>
<name>TIP41_YEAST</name>
<protein>
    <recommendedName>
        <fullName>Type 2A phosphatase activator TIP41</fullName>
    </recommendedName>
    <alternativeName>
        <fullName>PP2A phosphatase activator TIP41</fullName>
    </alternativeName>
    <alternativeName>
        <fullName>TAP42-interacting protein 1</fullName>
    </alternativeName>
</protein>